<comment type="function">
    <text evidence="5 6 7">Lytic polysaccharide monooxygenase (LPMO) that depolymerizes crystalline and amorphous polysaccharides via the oxidation of scissile alpha- or beta-(1-4)-glycosidic bonds, yielding exclusively C1 oxidation products (PubMed:22004347, PubMed:23102010, PubMed:35080911). Catalysis by LPMOs requires the reduction of the active-site copper from Cu(II) to Cu(I) by a reducing agent and H(2)O(2) or O(2) as a cosubstrate (PubMed:22004347).</text>
</comment>
<comment type="catalytic activity">
    <reaction evidence="5 7">
        <text>[(1-&gt;4)-beta-D-glucosyl]n+m + reduced acceptor + O2 = 4-dehydro-beta-D-glucosyl-[(1-&gt;4)-beta-D-glucosyl]n-1 + [(1-&gt;4)-beta-D-glucosyl]m + acceptor + H2O.</text>
        <dbReference type="EC" id="1.14.99.56"/>
    </reaction>
</comment>
<comment type="cofactor">
    <cofactor evidence="5">
        <name>Cu(2+)</name>
        <dbReference type="ChEBI" id="CHEBI:29036"/>
    </cofactor>
    <text evidence="5">Binds 1 copper ion per subunit.</text>
</comment>
<comment type="subcellular location">
    <subcellularLocation>
        <location evidence="11">Secreted</location>
    </subcellularLocation>
</comment>
<comment type="domain">
    <text evidence="2">Has a modular structure: an endo-beta-1,4-glucanase catalytic module at the N-terminus, a linker rich in serines and threonines, and a C-terminal carbohydrate-binding module (CBM). The CBM domain is essential for binding to and subsequent oxidative degradation of polysaccharide substrate.</text>
</comment>
<comment type="biotechnology">
    <text evidence="7">Lignocellulose is the most abundant polymeric composite on Earth and is a recalcitrant but promising renewable substrate for industrial biotechnology applications. Together with cellobiose dehydrogenases (CDHs) an enzymatic system capable of oxidative cellulose cleavage is formed, which increases the efficiency of cellulases and put LPMOs at focus of biofuel research.</text>
</comment>
<comment type="similarity">
    <text evidence="10">Belongs to the polysaccharide monooxygenase AA9 family.</text>
</comment>
<proteinExistence type="evidence at protein level"/>
<keyword id="KW-0119">Carbohydrate metabolism</keyword>
<keyword id="KW-0136">Cellulose degradation</keyword>
<keyword id="KW-0186">Copper</keyword>
<keyword id="KW-1015">Disulfide bond</keyword>
<keyword id="KW-0479">Metal-binding</keyword>
<keyword id="KW-0503">Monooxygenase</keyword>
<keyword id="KW-0560">Oxidoreductase</keyword>
<keyword id="KW-0624">Polysaccharide degradation</keyword>
<keyword id="KW-1185">Reference proteome</keyword>
<keyword id="KW-0964">Secreted</keyword>
<keyword id="KW-0732">Signal</keyword>
<feature type="signal peptide" evidence="3">
    <location>
        <begin position="1"/>
        <end position="20"/>
    </location>
</feature>
<feature type="chain" id="PRO_5004294243" description="AA9 family lytic polysaccharide monooxygenase E">
    <location>
        <begin position="21"/>
        <end position="330"/>
    </location>
</feature>
<feature type="domain" description="CBM1" evidence="4">
    <location>
        <begin position="293"/>
        <end position="330"/>
    </location>
</feature>
<feature type="binding site" evidence="2">
    <location>
        <position position="21"/>
    </location>
    <ligand>
        <name>Cu(2+)</name>
        <dbReference type="ChEBI" id="CHEBI:29036"/>
    </ligand>
</feature>
<feature type="binding site" evidence="1">
    <location>
        <position position="99"/>
    </location>
    <ligand>
        <name>Cu(2+)</name>
        <dbReference type="ChEBI" id="CHEBI:29036"/>
    </ligand>
</feature>
<feature type="binding site" evidence="1">
    <location>
        <position position="179"/>
    </location>
    <ligand>
        <name>O2</name>
        <dbReference type="ChEBI" id="CHEBI:15379"/>
    </ligand>
</feature>
<feature type="binding site" evidence="1">
    <location>
        <position position="188"/>
    </location>
    <ligand>
        <name>O2</name>
        <dbReference type="ChEBI" id="CHEBI:15379"/>
    </ligand>
</feature>
<feature type="binding site" evidence="2">
    <location>
        <position position="190"/>
    </location>
    <ligand>
        <name>Cu(2+)</name>
        <dbReference type="ChEBI" id="CHEBI:29036"/>
    </ligand>
</feature>
<feature type="disulfide bond" evidence="2">
    <location>
        <begin position="58"/>
        <end position="193"/>
    </location>
</feature>
<sequence>MRSTLVTGLIAGLLSQQAAAHATFQALWVDGADYGSQCARVPPSNSPVTDVTSNAMRCNTGTSPVAKKCPVKAGSTVTVEMHQQANDRSCSSEAIGGAHYGPVLVYMSKVSDAASADGSSGWFKIFEDTWAKKPSSSSGDDDFWGVKDLNSCCGKMQVKIPSDIPAGDYLLRAEVIALHTAASAGGAQLYMTCYQISVTGGGSATPATVSFPGAYKSSDPGILVDIHSAMSTYVAPGPAVYSGGSSKKAGSGCVGCESTCKVGSGPTGTASAVPVASTSAAAGGGGGGGSGGCSVAKYQQCGGTGYTGCTSCASGSTCSAVSPPYYSQCV</sequence>
<name>LP9E_NEUCR</name>
<evidence type="ECO:0000250" key="1">
    <source>
        <dbReference type="UniProtKB" id="Q1K8B6"/>
    </source>
</evidence>
<evidence type="ECO:0000250" key="2">
    <source>
        <dbReference type="UniProtKB" id="Q7SHI8"/>
    </source>
</evidence>
<evidence type="ECO:0000255" key="3"/>
<evidence type="ECO:0000255" key="4">
    <source>
        <dbReference type="PROSITE-ProRule" id="PRU00597"/>
    </source>
</evidence>
<evidence type="ECO:0000269" key="5">
    <source>
    </source>
</evidence>
<evidence type="ECO:0000269" key="6">
    <source>
    </source>
</evidence>
<evidence type="ECO:0000269" key="7">
    <source>
    </source>
</evidence>
<evidence type="ECO:0000303" key="8">
    <source>
    </source>
</evidence>
<evidence type="ECO:0000303" key="9">
    <source>
    </source>
</evidence>
<evidence type="ECO:0000305" key="10"/>
<evidence type="ECO:0000305" key="11">
    <source>
    </source>
</evidence>
<gene>
    <name type="primary">gh61-5</name>
    <name evidence="9" type="synonym">LPMO9E</name>
    <name evidence="8" type="synonym">PMO-08760</name>
    <name type="ORF">NCU08760</name>
</gene>
<organism>
    <name type="scientific">Neurospora crassa (strain ATCC 24698 / 74-OR23-1A / CBS 708.71 / DSM 1257 / FGSC 987)</name>
    <dbReference type="NCBI Taxonomy" id="367110"/>
    <lineage>
        <taxon>Eukaryota</taxon>
        <taxon>Fungi</taxon>
        <taxon>Dikarya</taxon>
        <taxon>Ascomycota</taxon>
        <taxon>Pezizomycotina</taxon>
        <taxon>Sordariomycetes</taxon>
        <taxon>Sordariomycetidae</taxon>
        <taxon>Sordariales</taxon>
        <taxon>Sordariaceae</taxon>
        <taxon>Neurospora</taxon>
    </lineage>
</organism>
<dbReference type="EC" id="1.14.99.56" evidence="5 7"/>
<dbReference type="EMBL" id="CM002238">
    <property type="protein sequence ID" value="EAA26873.2"/>
    <property type="molecule type" value="Genomic_DNA"/>
</dbReference>
<dbReference type="RefSeq" id="XP_956109.2">
    <property type="nucleotide sequence ID" value="XM_951016.2"/>
</dbReference>
<dbReference type="SMR" id="Q7RWN7"/>
<dbReference type="STRING" id="367110.Q7RWN7"/>
<dbReference type="CAZy" id="AA9">
    <property type="family name" value="Auxiliary Activities 9"/>
</dbReference>
<dbReference type="CAZy" id="CBM1">
    <property type="family name" value="Carbohydrate-Binding Module Family 1"/>
</dbReference>
<dbReference type="PaxDb" id="5141-EFNCRP00000004778"/>
<dbReference type="EnsemblFungi" id="EAA26873">
    <property type="protein sequence ID" value="EAA26873"/>
    <property type="gene ID" value="NCU08760"/>
</dbReference>
<dbReference type="GeneID" id="3872247"/>
<dbReference type="KEGG" id="ncr:NCU08760"/>
<dbReference type="VEuPathDB" id="FungiDB:NCU08760"/>
<dbReference type="HOGENOM" id="CLU_031730_0_1_1"/>
<dbReference type="InParanoid" id="Q7RWN7"/>
<dbReference type="OrthoDB" id="3238762at2759"/>
<dbReference type="BRENDA" id="1.14.99.54">
    <property type="organism ID" value="3627"/>
</dbReference>
<dbReference type="BRENDA" id="1.14.99.56">
    <property type="organism ID" value="3627"/>
</dbReference>
<dbReference type="Proteomes" id="UP000001805">
    <property type="component" value="Chromosome 3, Linkage Group III"/>
</dbReference>
<dbReference type="GO" id="GO:0005576">
    <property type="term" value="C:extracellular region"/>
    <property type="evidence" value="ECO:0007669"/>
    <property type="project" value="UniProtKB-SubCell"/>
</dbReference>
<dbReference type="GO" id="GO:0030248">
    <property type="term" value="F:cellulose binding"/>
    <property type="evidence" value="ECO:0007669"/>
    <property type="project" value="InterPro"/>
</dbReference>
<dbReference type="GO" id="GO:0046872">
    <property type="term" value="F:metal ion binding"/>
    <property type="evidence" value="ECO:0007669"/>
    <property type="project" value="UniProtKB-KW"/>
</dbReference>
<dbReference type="GO" id="GO:0004497">
    <property type="term" value="F:monooxygenase activity"/>
    <property type="evidence" value="ECO:0007669"/>
    <property type="project" value="UniProtKB-KW"/>
</dbReference>
<dbReference type="GO" id="GO:0030245">
    <property type="term" value="P:cellulose catabolic process"/>
    <property type="evidence" value="ECO:0007669"/>
    <property type="project" value="UniProtKB-KW"/>
</dbReference>
<dbReference type="CDD" id="cd21175">
    <property type="entry name" value="LPMO_AA9"/>
    <property type="match status" value="1"/>
</dbReference>
<dbReference type="Gene3D" id="2.70.50.70">
    <property type="match status" value="1"/>
</dbReference>
<dbReference type="InterPro" id="IPR049892">
    <property type="entry name" value="AA9"/>
</dbReference>
<dbReference type="InterPro" id="IPR005103">
    <property type="entry name" value="AA9_LPMO"/>
</dbReference>
<dbReference type="InterPro" id="IPR035971">
    <property type="entry name" value="CBD_sf"/>
</dbReference>
<dbReference type="InterPro" id="IPR000254">
    <property type="entry name" value="Cellulose-bd_dom_fun"/>
</dbReference>
<dbReference type="PANTHER" id="PTHR33353:SF9">
    <property type="entry name" value="ENDOGLUCANASE II"/>
    <property type="match status" value="1"/>
</dbReference>
<dbReference type="PANTHER" id="PTHR33353">
    <property type="entry name" value="PUTATIVE (AFU_ORTHOLOGUE AFUA_1G12560)-RELATED"/>
    <property type="match status" value="1"/>
</dbReference>
<dbReference type="Pfam" id="PF03443">
    <property type="entry name" value="AA9"/>
    <property type="match status" value="1"/>
</dbReference>
<dbReference type="Pfam" id="PF00734">
    <property type="entry name" value="CBM_1"/>
    <property type="match status" value="1"/>
</dbReference>
<dbReference type="SMART" id="SM00236">
    <property type="entry name" value="fCBD"/>
    <property type="match status" value="1"/>
</dbReference>
<dbReference type="SUPFAM" id="SSF57180">
    <property type="entry name" value="Cellulose-binding domain"/>
    <property type="match status" value="1"/>
</dbReference>
<dbReference type="PROSITE" id="PS51164">
    <property type="entry name" value="CBM1_2"/>
    <property type="match status" value="1"/>
</dbReference>
<reference key="1">
    <citation type="journal article" date="2003" name="Nature">
        <title>The genome sequence of the filamentous fungus Neurospora crassa.</title>
        <authorList>
            <person name="Galagan J.E."/>
            <person name="Calvo S.E."/>
            <person name="Borkovich K.A."/>
            <person name="Selker E.U."/>
            <person name="Read N.D."/>
            <person name="Jaffe D.B."/>
            <person name="FitzHugh W."/>
            <person name="Ma L.-J."/>
            <person name="Smirnov S."/>
            <person name="Purcell S."/>
            <person name="Rehman B."/>
            <person name="Elkins T."/>
            <person name="Engels R."/>
            <person name="Wang S."/>
            <person name="Nielsen C.B."/>
            <person name="Butler J."/>
            <person name="Endrizzi M."/>
            <person name="Qui D."/>
            <person name="Ianakiev P."/>
            <person name="Bell-Pedersen D."/>
            <person name="Nelson M.A."/>
            <person name="Werner-Washburne M."/>
            <person name="Selitrennikoff C.P."/>
            <person name="Kinsey J.A."/>
            <person name="Braun E.L."/>
            <person name="Zelter A."/>
            <person name="Schulte U."/>
            <person name="Kothe G.O."/>
            <person name="Jedd G."/>
            <person name="Mewes H.-W."/>
            <person name="Staben C."/>
            <person name="Marcotte E."/>
            <person name="Greenberg D."/>
            <person name="Roy A."/>
            <person name="Foley K."/>
            <person name="Naylor J."/>
            <person name="Stange-Thomann N."/>
            <person name="Barrett R."/>
            <person name="Gnerre S."/>
            <person name="Kamal M."/>
            <person name="Kamvysselis M."/>
            <person name="Mauceli E.W."/>
            <person name="Bielke C."/>
            <person name="Rudd S."/>
            <person name="Frishman D."/>
            <person name="Krystofova S."/>
            <person name="Rasmussen C."/>
            <person name="Metzenberg R.L."/>
            <person name="Perkins D.D."/>
            <person name="Kroken S."/>
            <person name="Cogoni C."/>
            <person name="Macino G."/>
            <person name="Catcheside D.E.A."/>
            <person name="Li W."/>
            <person name="Pratt R.J."/>
            <person name="Osmani S.A."/>
            <person name="DeSouza C.P.C."/>
            <person name="Glass N.L."/>
            <person name="Orbach M.J."/>
            <person name="Berglund J.A."/>
            <person name="Voelker R."/>
            <person name="Yarden O."/>
            <person name="Plamann M."/>
            <person name="Seiler S."/>
            <person name="Dunlap J.C."/>
            <person name="Radford A."/>
            <person name="Aramayo R."/>
            <person name="Natvig D.O."/>
            <person name="Alex L.A."/>
            <person name="Mannhaupt G."/>
            <person name="Ebbole D.J."/>
            <person name="Freitag M."/>
            <person name="Paulsen I."/>
            <person name="Sachs M.S."/>
            <person name="Lander E.S."/>
            <person name="Nusbaum C."/>
            <person name="Birren B.W."/>
        </authorList>
    </citation>
    <scope>NUCLEOTIDE SEQUENCE [LARGE SCALE GENOMIC DNA]</scope>
    <source>
        <strain>ATCC 24698 / 74-OR23-1A / CBS 708.71 / DSM 1257 / FGSC 987</strain>
    </source>
</reference>
<reference key="2">
    <citation type="journal article" date="2011" name="ACS Chem. Biol.">
        <title>Cellobiose dehydrogenase and a copper-dependent polysaccharide monooxygenase potentiate cellulose degradation by Neurospora crassa.</title>
        <authorList>
            <person name="Phillips C.M."/>
            <person name="Beeson W.T."/>
            <person name="Cate J.H."/>
            <person name="Marletta M.A."/>
        </authorList>
    </citation>
    <scope>FUNCTION</scope>
    <scope>CATALYTIC ACTIVITY</scope>
    <scope>COFACTOR</scope>
</reference>
<reference key="3">
    <citation type="journal article" date="2012" name="Biotechnol. Biofuels">
        <title>Production of four Neurospora crassa lytic polysaccharide monooxygenases in Pichia pastoris monitored by a fluorimetric assay.</title>
        <authorList>
            <person name="Kittl R."/>
            <person name="Kracher D."/>
            <person name="Burgstaller D."/>
            <person name="Haltrich D."/>
            <person name="Ludwig R."/>
        </authorList>
    </citation>
    <scope>FUNCTION</scope>
    <scope>BIOTECHNOLOGY</scope>
</reference>
<reference key="4">
    <citation type="journal article" date="2022" name="Appl. Environ. Microbiol.">
        <title>Comparison of six lytic polysaccharide monooxygenases from Thermothielavioides terrestris shows that functional variation underlies the multiplicity of LPMO genes in filamentous fungi.</title>
        <authorList>
            <person name="Tolgo M."/>
            <person name="Hegnar O.A."/>
            <person name="Oestby H."/>
            <person name="Varnai A."/>
            <person name="Vilaplana F."/>
            <person name="Eijsink V.G.H."/>
            <person name="Olsson L."/>
        </authorList>
    </citation>
    <scope>FUNCTION</scope>
    <scope>CATALYTIC ACTIVITY</scope>
</reference>
<accession>Q7RWN7</accession>
<protein>
    <recommendedName>
        <fullName evidence="9">AA9 family lytic polysaccharide monooxygenase E</fullName>
        <shortName evidence="9">LPMO9E</shortName>
        <ecNumber evidence="5 7">1.14.99.56</ecNumber>
    </recommendedName>
    <alternativeName>
        <fullName evidence="10">Endo-1,4-beta-glucanase LPMO9E</fullName>
        <shortName evidence="10">Endoglucanase LPMO9E</shortName>
    </alternativeName>
    <alternativeName>
        <fullName evidence="10">Glycosyl hydrolase 61 family protein 5</fullName>
    </alternativeName>
</protein>